<reference key="1">
    <citation type="journal article" date="2006" name="Proc. Natl. Acad. Sci. U.S.A.">
        <title>Molecular genetic anatomy of inter- and intraserotype variation in the human bacterial pathogen group A Streptococcus.</title>
        <authorList>
            <person name="Beres S.B."/>
            <person name="Richter E.W."/>
            <person name="Nagiec M.J."/>
            <person name="Sumby P."/>
            <person name="Porcella S.F."/>
            <person name="DeLeo F.R."/>
            <person name="Musser J.M."/>
        </authorList>
    </citation>
    <scope>NUCLEOTIDE SEQUENCE [LARGE SCALE GENOMIC DNA]</scope>
    <source>
        <strain>MGAS2096</strain>
    </source>
</reference>
<proteinExistence type="inferred from homology"/>
<dbReference type="EC" id="6.3.2.8" evidence="1"/>
<dbReference type="EMBL" id="CP000261">
    <property type="protein sequence ID" value="ABF35360.1"/>
    <property type="molecule type" value="Genomic_DNA"/>
</dbReference>
<dbReference type="SMR" id="Q1JDE8"/>
<dbReference type="KEGG" id="spj:MGAS2096_Spy0308"/>
<dbReference type="HOGENOM" id="CLU_028104_1_0_9"/>
<dbReference type="UniPathway" id="UPA00219"/>
<dbReference type="GO" id="GO:0005737">
    <property type="term" value="C:cytoplasm"/>
    <property type="evidence" value="ECO:0007669"/>
    <property type="project" value="UniProtKB-SubCell"/>
</dbReference>
<dbReference type="GO" id="GO:0005524">
    <property type="term" value="F:ATP binding"/>
    <property type="evidence" value="ECO:0007669"/>
    <property type="project" value="UniProtKB-UniRule"/>
</dbReference>
<dbReference type="GO" id="GO:0008763">
    <property type="term" value="F:UDP-N-acetylmuramate-L-alanine ligase activity"/>
    <property type="evidence" value="ECO:0007669"/>
    <property type="project" value="UniProtKB-UniRule"/>
</dbReference>
<dbReference type="GO" id="GO:0051301">
    <property type="term" value="P:cell division"/>
    <property type="evidence" value="ECO:0007669"/>
    <property type="project" value="UniProtKB-KW"/>
</dbReference>
<dbReference type="GO" id="GO:0071555">
    <property type="term" value="P:cell wall organization"/>
    <property type="evidence" value="ECO:0007669"/>
    <property type="project" value="UniProtKB-KW"/>
</dbReference>
<dbReference type="GO" id="GO:0009252">
    <property type="term" value="P:peptidoglycan biosynthetic process"/>
    <property type="evidence" value="ECO:0007669"/>
    <property type="project" value="UniProtKB-UniRule"/>
</dbReference>
<dbReference type="GO" id="GO:0008360">
    <property type="term" value="P:regulation of cell shape"/>
    <property type="evidence" value="ECO:0007669"/>
    <property type="project" value="UniProtKB-KW"/>
</dbReference>
<dbReference type="Gene3D" id="3.90.190.20">
    <property type="entry name" value="Mur ligase, C-terminal domain"/>
    <property type="match status" value="1"/>
</dbReference>
<dbReference type="Gene3D" id="3.40.1190.10">
    <property type="entry name" value="Mur-like, catalytic domain"/>
    <property type="match status" value="1"/>
</dbReference>
<dbReference type="Gene3D" id="3.40.50.720">
    <property type="entry name" value="NAD(P)-binding Rossmann-like Domain"/>
    <property type="match status" value="1"/>
</dbReference>
<dbReference type="HAMAP" id="MF_00046">
    <property type="entry name" value="MurC"/>
    <property type="match status" value="1"/>
</dbReference>
<dbReference type="InterPro" id="IPR036565">
    <property type="entry name" value="Mur-like_cat_sf"/>
</dbReference>
<dbReference type="InterPro" id="IPR004101">
    <property type="entry name" value="Mur_ligase_C"/>
</dbReference>
<dbReference type="InterPro" id="IPR036615">
    <property type="entry name" value="Mur_ligase_C_dom_sf"/>
</dbReference>
<dbReference type="InterPro" id="IPR013221">
    <property type="entry name" value="Mur_ligase_cen"/>
</dbReference>
<dbReference type="InterPro" id="IPR000713">
    <property type="entry name" value="Mur_ligase_N"/>
</dbReference>
<dbReference type="InterPro" id="IPR050061">
    <property type="entry name" value="MurCDEF_pg_biosynth"/>
</dbReference>
<dbReference type="InterPro" id="IPR005758">
    <property type="entry name" value="UDP-N-AcMur_Ala_ligase_MurC"/>
</dbReference>
<dbReference type="NCBIfam" id="TIGR01082">
    <property type="entry name" value="murC"/>
    <property type="match status" value="1"/>
</dbReference>
<dbReference type="PANTHER" id="PTHR43445:SF3">
    <property type="entry name" value="UDP-N-ACETYLMURAMATE--L-ALANINE LIGASE"/>
    <property type="match status" value="1"/>
</dbReference>
<dbReference type="PANTHER" id="PTHR43445">
    <property type="entry name" value="UDP-N-ACETYLMURAMATE--L-ALANINE LIGASE-RELATED"/>
    <property type="match status" value="1"/>
</dbReference>
<dbReference type="Pfam" id="PF01225">
    <property type="entry name" value="Mur_ligase"/>
    <property type="match status" value="1"/>
</dbReference>
<dbReference type="Pfam" id="PF02875">
    <property type="entry name" value="Mur_ligase_C"/>
    <property type="match status" value="1"/>
</dbReference>
<dbReference type="Pfam" id="PF08245">
    <property type="entry name" value="Mur_ligase_M"/>
    <property type="match status" value="1"/>
</dbReference>
<dbReference type="SUPFAM" id="SSF51984">
    <property type="entry name" value="MurCD N-terminal domain"/>
    <property type="match status" value="1"/>
</dbReference>
<dbReference type="SUPFAM" id="SSF53623">
    <property type="entry name" value="MurD-like peptide ligases, catalytic domain"/>
    <property type="match status" value="1"/>
</dbReference>
<dbReference type="SUPFAM" id="SSF53244">
    <property type="entry name" value="MurD-like peptide ligases, peptide-binding domain"/>
    <property type="match status" value="1"/>
</dbReference>
<keyword id="KW-0067">ATP-binding</keyword>
<keyword id="KW-0131">Cell cycle</keyword>
<keyword id="KW-0132">Cell division</keyword>
<keyword id="KW-0133">Cell shape</keyword>
<keyword id="KW-0961">Cell wall biogenesis/degradation</keyword>
<keyword id="KW-0963">Cytoplasm</keyword>
<keyword id="KW-0436">Ligase</keyword>
<keyword id="KW-0547">Nucleotide-binding</keyword>
<keyword id="KW-0573">Peptidoglycan synthesis</keyword>
<protein>
    <recommendedName>
        <fullName evidence="1">UDP-N-acetylmuramate--L-alanine ligase</fullName>
        <ecNumber evidence="1">6.3.2.8</ecNumber>
    </recommendedName>
    <alternativeName>
        <fullName evidence="1">UDP-N-acetylmuramoyl-L-alanine synthetase</fullName>
    </alternativeName>
</protein>
<evidence type="ECO:0000255" key="1">
    <source>
        <dbReference type="HAMAP-Rule" id="MF_00046"/>
    </source>
</evidence>
<organism>
    <name type="scientific">Streptococcus pyogenes serotype M12 (strain MGAS2096)</name>
    <dbReference type="NCBI Taxonomy" id="370553"/>
    <lineage>
        <taxon>Bacteria</taxon>
        <taxon>Bacillati</taxon>
        <taxon>Bacillota</taxon>
        <taxon>Bacilli</taxon>
        <taxon>Lactobacillales</taxon>
        <taxon>Streptococcaceae</taxon>
        <taxon>Streptococcus</taxon>
    </lineage>
</organism>
<feature type="chain" id="PRO_1000004421" description="UDP-N-acetylmuramate--L-alanine ligase">
    <location>
        <begin position="1"/>
        <end position="442"/>
    </location>
</feature>
<feature type="binding site" evidence="1">
    <location>
        <begin position="109"/>
        <end position="115"/>
    </location>
    <ligand>
        <name>ATP</name>
        <dbReference type="ChEBI" id="CHEBI:30616"/>
    </ligand>
</feature>
<gene>
    <name evidence="1" type="primary">murC</name>
    <name type="ordered locus">MGAS2096_Spy0308</name>
</gene>
<sequence length="442" mass="49594">MSKTYHFIGIKGSGMSALALMLHQMGHKVQGSDVEKYYFTQRGLEQAGITILPFSEDNITPDMELIVGNAFRENNKEVAYALRHQIPFKRYHDFLGDFMKSFISFAVAGAHGKTSTTGLLSHVLKNITDTSYLIGDGTGRGSANAQYFVFESDEYERHFMPYHPEYSIITNIDFDHPDYFTGIADVRNAFNDYAKQVKKALFVYGEDDELKKIEAPAPIYYYGFEEGNDFIAYDITRTTNGSDFKVKHQGEVIGQFHVPAYGKHNILNATAVIANLFVAGIDMALVADHLKTFSGVKRRFTEKIINDTIIIDDFAHHPTEIVATIDAARQKYPSKEIVAIFQPHTFTRTIALLEDFACALNEADSVYLAQIYGSAREVDKGEVKVEDLAAKIIKPSQVVTVENVSPLLDHDNAVYVFMGAGDIQLYEHSFEELLANLTKNNQ</sequence>
<comment type="function">
    <text evidence="1">Cell wall formation.</text>
</comment>
<comment type="catalytic activity">
    <reaction evidence="1">
        <text>UDP-N-acetyl-alpha-D-muramate + L-alanine + ATP = UDP-N-acetyl-alpha-D-muramoyl-L-alanine + ADP + phosphate + H(+)</text>
        <dbReference type="Rhea" id="RHEA:23372"/>
        <dbReference type="ChEBI" id="CHEBI:15378"/>
        <dbReference type="ChEBI" id="CHEBI:30616"/>
        <dbReference type="ChEBI" id="CHEBI:43474"/>
        <dbReference type="ChEBI" id="CHEBI:57972"/>
        <dbReference type="ChEBI" id="CHEBI:70757"/>
        <dbReference type="ChEBI" id="CHEBI:83898"/>
        <dbReference type="ChEBI" id="CHEBI:456216"/>
        <dbReference type="EC" id="6.3.2.8"/>
    </reaction>
</comment>
<comment type="pathway">
    <text evidence="1">Cell wall biogenesis; peptidoglycan biosynthesis.</text>
</comment>
<comment type="subcellular location">
    <subcellularLocation>
        <location evidence="1">Cytoplasm</location>
    </subcellularLocation>
</comment>
<comment type="similarity">
    <text evidence="1">Belongs to the MurCDEF family.</text>
</comment>
<accession>Q1JDE8</accession>
<name>MURC_STRPB</name>